<reference key="1">
    <citation type="journal article" date="1995" name="Science">
        <title>Whole-genome random sequencing and assembly of Haemophilus influenzae Rd.</title>
        <authorList>
            <person name="Fleischmann R.D."/>
            <person name="Adams M.D."/>
            <person name="White O."/>
            <person name="Clayton R.A."/>
            <person name="Kirkness E.F."/>
            <person name="Kerlavage A.R."/>
            <person name="Bult C.J."/>
            <person name="Tomb J.-F."/>
            <person name="Dougherty B.A."/>
            <person name="Merrick J.M."/>
            <person name="McKenney K."/>
            <person name="Sutton G.G."/>
            <person name="FitzHugh W."/>
            <person name="Fields C.A."/>
            <person name="Gocayne J.D."/>
            <person name="Scott J.D."/>
            <person name="Shirley R."/>
            <person name="Liu L.-I."/>
            <person name="Glodek A."/>
            <person name="Kelley J.M."/>
            <person name="Weidman J.F."/>
            <person name="Phillips C.A."/>
            <person name="Spriggs T."/>
            <person name="Hedblom E."/>
            <person name="Cotton M.D."/>
            <person name="Utterback T.R."/>
            <person name="Hanna M.C."/>
            <person name="Nguyen D.T."/>
            <person name="Saudek D.M."/>
            <person name="Brandon R.C."/>
            <person name="Fine L.D."/>
            <person name="Fritchman J.L."/>
            <person name="Fuhrmann J.L."/>
            <person name="Geoghagen N.S.M."/>
            <person name="Gnehm C.L."/>
            <person name="McDonald L.A."/>
            <person name="Small K.V."/>
            <person name="Fraser C.M."/>
            <person name="Smith H.O."/>
            <person name="Venter J.C."/>
        </authorList>
    </citation>
    <scope>NUCLEOTIDE SEQUENCE [LARGE SCALE GENOMIC DNA]</scope>
    <source>
        <strain>ATCC 51907 / DSM 11121 / KW20 / Rd</strain>
    </source>
</reference>
<keyword id="KW-1185">Reference proteome</keyword>
<name>Y1524_HAEIN</name>
<gene>
    <name type="ordered locus">HI_1524</name>
</gene>
<sequence length="50" mass="5265">MIPTGEKIHLLIKGSSSANIPCELKSRSKLSPVTNGGKTIGKSNKVSKND</sequence>
<organism>
    <name type="scientific">Haemophilus influenzae (strain ATCC 51907 / DSM 11121 / KW20 / Rd)</name>
    <dbReference type="NCBI Taxonomy" id="71421"/>
    <lineage>
        <taxon>Bacteria</taxon>
        <taxon>Pseudomonadati</taxon>
        <taxon>Pseudomonadota</taxon>
        <taxon>Gammaproteobacteria</taxon>
        <taxon>Pasteurellales</taxon>
        <taxon>Pasteurellaceae</taxon>
        <taxon>Haemophilus</taxon>
    </lineage>
</organism>
<dbReference type="EMBL" id="L42023">
    <property type="protein sequence ID" value="AAC23181.1"/>
    <property type="molecule type" value="Genomic_DNA"/>
</dbReference>
<dbReference type="PIR" id="B64035">
    <property type="entry name" value="B64035"/>
</dbReference>
<dbReference type="STRING" id="71421.HI_1524"/>
<dbReference type="EnsemblBacteria" id="AAC23181">
    <property type="protein sequence ID" value="AAC23181"/>
    <property type="gene ID" value="HI_1524"/>
</dbReference>
<dbReference type="KEGG" id="hin:HI_1524"/>
<dbReference type="HOGENOM" id="CLU_3118409_0_0_6"/>
<dbReference type="Proteomes" id="UP000000579">
    <property type="component" value="Chromosome"/>
</dbReference>
<feature type="chain" id="PRO_0000078082" description="Uncharacterized protein HI_1524">
    <location>
        <begin position="1"/>
        <end position="50"/>
    </location>
</feature>
<feature type="region of interest" description="Disordered" evidence="1">
    <location>
        <begin position="28"/>
        <end position="50"/>
    </location>
</feature>
<feature type="compositionally biased region" description="Polar residues" evidence="1">
    <location>
        <begin position="29"/>
        <end position="50"/>
    </location>
</feature>
<accession>P44244</accession>
<protein>
    <recommendedName>
        <fullName>Uncharacterized protein HI_1524</fullName>
    </recommendedName>
</protein>
<evidence type="ECO:0000256" key="1">
    <source>
        <dbReference type="SAM" id="MobiDB-lite"/>
    </source>
</evidence>
<proteinExistence type="predicted"/>